<feature type="chain" id="PRO_0000116588" description="Uncharacterized protein C6C3.09">
    <location>
        <begin position="1"/>
        <end position="335"/>
    </location>
</feature>
<protein>
    <recommendedName>
        <fullName>Uncharacterized protein C6C3.09</fullName>
    </recommendedName>
</protein>
<keyword id="KW-1185">Reference proteome</keyword>
<gene>
    <name type="ORF">SPAC6C3.09</name>
</gene>
<accession>Q10312</accession>
<accession>Q9UUL8</accession>
<dbReference type="EMBL" id="CU329670">
    <property type="protein sequence ID" value="CAB40281.1"/>
    <property type="molecule type" value="Genomic_DNA"/>
</dbReference>
<dbReference type="PIR" id="T39033">
    <property type="entry name" value="T39033"/>
</dbReference>
<dbReference type="SMR" id="Q10312"/>
<dbReference type="BioGRID" id="279451">
    <property type="interactions" value="2"/>
</dbReference>
<dbReference type="FunCoup" id="Q10312">
    <property type="interactions" value="72"/>
</dbReference>
<dbReference type="STRING" id="284812.Q10312"/>
<dbReference type="PaxDb" id="4896-SPAC6C3.09.1"/>
<dbReference type="EnsemblFungi" id="SPAC6C3.09.1">
    <property type="protein sequence ID" value="SPAC6C3.09.1:pep"/>
    <property type="gene ID" value="SPAC6C3.09"/>
</dbReference>
<dbReference type="KEGG" id="spo:2543013"/>
<dbReference type="PomBase" id="SPAC6C3.09"/>
<dbReference type="VEuPathDB" id="FungiDB:SPAC6C3.09"/>
<dbReference type="HOGENOM" id="CLU_829384_0_0_1"/>
<dbReference type="InParanoid" id="Q10312"/>
<dbReference type="OMA" id="GRFNNQW"/>
<dbReference type="PhylomeDB" id="Q10312"/>
<dbReference type="PRO" id="PR:Q10312"/>
<dbReference type="Proteomes" id="UP000002485">
    <property type="component" value="Chromosome I"/>
</dbReference>
<dbReference type="GO" id="GO:0005829">
    <property type="term" value="C:cytosol"/>
    <property type="evidence" value="ECO:0007005"/>
    <property type="project" value="PomBase"/>
</dbReference>
<dbReference type="GO" id="GO:0030681">
    <property type="term" value="C:multimeric ribonuclease P complex"/>
    <property type="evidence" value="ECO:0000318"/>
    <property type="project" value="GO_Central"/>
</dbReference>
<dbReference type="GO" id="GO:0005655">
    <property type="term" value="C:nucleolar ribonuclease P complex"/>
    <property type="evidence" value="ECO:0000250"/>
    <property type="project" value="PomBase"/>
</dbReference>
<dbReference type="GO" id="GO:0005634">
    <property type="term" value="C:nucleus"/>
    <property type="evidence" value="ECO:0007005"/>
    <property type="project" value="PomBase"/>
</dbReference>
<dbReference type="GO" id="GO:0000172">
    <property type="term" value="C:ribonuclease MRP complex"/>
    <property type="evidence" value="ECO:0000269"/>
    <property type="project" value="PomBase"/>
</dbReference>
<dbReference type="GO" id="GO:0000447">
    <property type="term" value="P:endonucleolytic cleavage in ITS1 to separate SSU-rRNA from 5.8S rRNA and LSU-rRNA from tricistronic rRNA transcript (SSU-rRNA, 5.8S rRNA, LSU-rRNA)"/>
    <property type="evidence" value="ECO:0000314"/>
    <property type="project" value="PomBase"/>
</dbReference>
<dbReference type="GO" id="GO:0001682">
    <property type="term" value="P:tRNA 5'-leader removal"/>
    <property type="evidence" value="ECO:0000318"/>
    <property type="project" value="GO_Central"/>
</dbReference>
<dbReference type="GO" id="GO:0008033">
    <property type="term" value="P:tRNA processing"/>
    <property type="evidence" value="ECO:0000314"/>
    <property type="project" value="PomBase"/>
</dbReference>
<dbReference type="InterPro" id="IPR013893">
    <property type="entry name" value="RNase_P_Rpp40"/>
</dbReference>
<dbReference type="PANTHER" id="PTHR15396">
    <property type="entry name" value="RIBONUCLEASE P PROTEIN SUBUNIT P40"/>
    <property type="match status" value="1"/>
</dbReference>
<dbReference type="PANTHER" id="PTHR15396:SF1">
    <property type="entry name" value="RIBONUCLEASE P PROTEIN SUBUNIT P40"/>
    <property type="match status" value="1"/>
</dbReference>
<dbReference type="Pfam" id="PF08584">
    <property type="entry name" value="Ribonuc_P_40"/>
    <property type="match status" value="1"/>
</dbReference>
<organism>
    <name type="scientific">Schizosaccharomyces pombe (strain 972 / ATCC 24843)</name>
    <name type="common">Fission yeast</name>
    <dbReference type="NCBI Taxonomy" id="284812"/>
    <lineage>
        <taxon>Eukaryota</taxon>
        <taxon>Fungi</taxon>
        <taxon>Dikarya</taxon>
        <taxon>Ascomycota</taxon>
        <taxon>Taphrinomycotina</taxon>
        <taxon>Schizosaccharomycetes</taxon>
        <taxon>Schizosaccharomycetales</taxon>
        <taxon>Schizosaccharomycetaceae</taxon>
        <taxon>Schizosaccharomyces</taxon>
    </lineage>
</organism>
<proteinExistence type="predicted"/>
<reference key="1">
    <citation type="journal article" date="2002" name="Nature">
        <title>The genome sequence of Schizosaccharomyces pombe.</title>
        <authorList>
            <person name="Wood V."/>
            <person name="Gwilliam R."/>
            <person name="Rajandream M.A."/>
            <person name="Lyne M.H."/>
            <person name="Lyne R."/>
            <person name="Stewart A."/>
            <person name="Sgouros J.G."/>
            <person name="Peat N."/>
            <person name="Hayles J."/>
            <person name="Baker S.G."/>
            <person name="Basham D."/>
            <person name="Bowman S."/>
            <person name="Brooks K."/>
            <person name="Brown D."/>
            <person name="Brown S."/>
            <person name="Chillingworth T."/>
            <person name="Churcher C.M."/>
            <person name="Collins M."/>
            <person name="Connor R."/>
            <person name="Cronin A."/>
            <person name="Davis P."/>
            <person name="Feltwell T."/>
            <person name="Fraser A."/>
            <person name="Gentles S."/>
            <person name="Goble A."/>
            <person name="Hamlin N."/>
            <person name="Harris D.E."/>
            <person name="Hidalgo J."/>
            <person name="Hodgson G."/>
            <person name="Holroyd S."/>
            <person name="Hornsby T."/>
            <person name="Howarth S."/>
            <person name="Huckle E.J."/>
            <person name="Hunt S."/>
            <person name="Jagels K."/>
            <person name="James K.D."/>
            <person name="Jones L."/>
            <person name="Jones M."/>
            <person name="Leather S."/>
            <person name="McDonald S."/>
            <person name="McLean J."/>
            <person name="Mooney P."/>
            <person name="Moule S."/>
            <person name="Mungall K.L."/>
            <person name="Murphy L.D."/>
            <person name="Niblett D."/>
            <person name="Odell C."/>
            <person name="Oliver K."/>
            <person name="O'Neil S."/>
            <person name="Pearson D."/>
            <person name="Quail M.A."/>
            <person name="Rabbinowitsch E."/>
            <person name="Rutherford K.M."/>
            <person name="Rutter S."/>
            <person name="Saunders D."/>
            <person name="Seeger K."/>
            <person name="Sharp S."/>
            <person name="Skelton J."/>
            <person name="Simmonds M.N."/>
            <person name="Squares R."/>
            <person name="Squares S."/>
            <person name="Stevens K."/>
            <person name="Taylor K."/>
            <person name="Taylor R.G."/>
            <person name="Tivey A."/>
            <person name="Walsh S.V."/>
            <person name="Warren T."/>
            <person name="Whitehead S."/>
            <person name="Woodward J.R."/>
            <person name="Volckaert G."/>
            <person name="Aert R."/>
            <person name="Robben J."/>
            <person name="Grymonprez B."/>
            <person name="Weltjens I."/>
            <person name="Vanstreels E."/>
            <person name="Rieger M."/>
            <person name="Schaefer M."/>
            <person name="Mueller-Auer S."/>
            <person name="Gabel C."/>
            <person name="Fuchs M."/>
            <person name="Duesterhoeft A."/>
            <person name="Fritzc C."/>
            <person name="Holzer E."/>
            <person name="Moestl D."/>
            <person name="Hilbert H."/>
            <person name="Borzym K."/>
            <person name="Langer I."/>
            <person name="Beck A."/>
            <person name="Lehrach H."/>
            <person name="Reinhardt R."/>
            <person name="Pohl T.M."/>
            <person name="Eger P."/>
            <person name="Zimmermann W."/>
            <person name="Wedler H."/>
            <person name="Wambutt R."/>
            <person name="Purnelle B."/>
            <person name="Goffeau A."/>
            <person name="Cadieu E."/>
            <person name="Dreano S."/>
            <person name="Gloux S."/>
            <person name="Lelaure V."/>
            <person name="Mottier S."/>
            <person name="Galibert F."/>
            <person name="Aves S.J."/>
            <person name="Xiang Z."/>
            <person name="Hunt C."/>
            <person name="Moore K."/>
            <person name="Hurst S.M."/>
            <person name="Lucas M."/>
            <person name="Rochet M."/>
            <person name="Gaillardin C."/>
            <person name="Tallada V.A."/>
            <person name="Garzon A."/>
            <person name="Thode G."/>
            <person name="Daga R.R."/>
            <person name="Cruzado L."/>
            <person name="Jimenez J."/>
            <person name="Sanchez M."/>
            <person name="del Rey F."/>
            <person name="Benito J."/>
            <person name="Dominguez A."/>
            <person name="Revuelta J.L."/>
            <person name="Moreno S."/>
            <person name="Armstrong J."/>
            <person name="Forsburg S.L."/>
            <person name="Cerutti L."/>
            <person name="Lowe T."/>
            <person name="McCombie W.R."/>
            <person name="Paulsen I."/>
            <person name="Potashkin J."/>
            <person name="Shpakovski G.V."/>
            <person name="Ussery D."/>
            <person name="Barrell B.G."/>
            <person name="Nurse P."/>
        </authorList>
    </citation>
    <scope>NUCLEOTIDE SEQUENCE [LARGE SCALE GENOMIC DNA]</scope>
    <source>
        <strain>972 / ATCC 24843</strain>
    </source>
</reference>
<sequence>MNCAFTKELKDEIYQKNYTEHEILQNAYNGKLDILLPVEDASEEAIRSITKIVQDLSFYEFSGSPALLLHPDLYSTFIHTGIATIVSSSDNDNKICISQGILSVTLDKDSYLVSGIDAKPSSSEPKDTLWVANIDLKSAFLRPQWKGFERLKAALGRLPGKWSFYLTFPTEKVDQSYQNNLSHSLPVPMISREINLKKGKLDQAKIPPPLVSTLNRNELFPSNGPLEVLEILSFLRCNAKCVQNSFVPDPYISRYKPSCAVTDVLYLSIKGLFSSSTCLELYELIRNISWNFIGVESFNSFRDVDNSSQLHSGDSSLLSFYDSRTERIRWTWRLS</sequence>
<name>YD59_SCHPO</name>